<proteinExistence type="inferred from homology"/>
<accession>B0T2E1</accession>
<reference key="1">
    <citation type="submission" date="2008-01" db="EMBL/GenBank/DDBJ databases">
        <title>Complete sequence of chromosome of Caulobacter sp. K31.</title>
        <authorList>
            <consortium name="US DOE Joint Genome Institute"/>
            <person name="Copeland A."/>
            <person name="Lucas S."/>
            <person name="Lapidus A."/>
            <person name="Barry K."/>
            <person name="Glavina del Rio T."/>
            <person name="Dalin E."/>
            <person name="Tice H."/>
            <person name="Pitluck S."/>
            <person name="Bruce D."/>
            <person name="Goodwin L."/>
            <person name="Thompson L.S."/>
            <person name="Brettin T."/>
            <person name="Detter J.C."/>
            <person name="Han C."/>
            <person name="Schmutz J."/>
            <person name="Larimer F."/>
            <person name="Land M."/>
            <person name="Hauser L."/>
            <person name="Kyrpides N."/>
            <person name="Kim E."/>
            <person name="Stephens C."/>
            <person name="Richardson P."/>
        </authorList>
    </citation>
    <scope>NUCLEOTIDE SEQUENCE [LARGE SCALE GENOMIC DNA]</scope>
    <source>
        <strain>K31</strain>
    </source>
</reference>
<protein>
    <recommendedName>
        <fullName evidence="1">Large ribosomal subunit protein uL15</fullName>
    </recommendedName>
    <alternativeName>
        <fullName evidence="3">50S ribosomal protein L15</fullName>
    </alternativeName>
</protein>
<name>RL15_CAUSK</name>
<evidence type="ECO:0000255" key="1">
    <source>
        <dbReference type="HAMAP-Rule" id="MF_01341"/>
    </source>
</evidence>
<evidence type="ECO:0000256" key="2">
    <source>
        <dbReference type="SAM" id="MobiDB-lite"/>
    </source>
</evidence>
<evidence type="ECO:0000305" key="3"/>
<organism>
    <name type="scientific">Caulobacter sp. (strain K31)</name>
    <dbReference type="NCBI Taxonomy" id="366602"/>
    <lineage>
        <taxon>Bacteria</taxon>
        <taxon>Pseudomonadati</taxon>
        <taxon>Pseudomonadota</taxon>
        <taxon>Alphaproteobacteria</taxon>
        <taxon>Caulobacterales</taxon>
        <taxon>Caulobacteraceae</taxon>
        <taxon>Caulobacter</taxon>
    </lineage>
</organism>
<dbReference type="EMBL" id="CP000927">
    <property type="protein sequence ID" value="ABZ70762.1"/>
    <property type="molecule type" value="Genomic_DNA"/>
</dbReference>
<dbReference type="SMR" id="B0T2E1"/>
<dbReference type="STRING" id="366602.Caul_1633"/>
<dbReference type="KEGG" id="cak:Caul_1633"/>
<dbReference type="eggNOG" id="COG0200">
    <property type="taxonomic scope" value="Bacteria"/>
</dbReference>
<dbReference type="HOGENOM" id="CLU_055188_4_0_5"/>
<dbReference type="OrthoDB" id="9810293at2"/>
<dbReference type="GO" id="GO:0022625">
    <property type="term" value="C:cytosolic large ribosomal subunit"/>
    <property type="evidence" value="ECO:0007669"/>
    <property type="project" value="TreeGrafter"/>
</dbReference>
<dbReference type="GO" id="GO:0019843">
    <property type="term" value="F:rRNA binding"/>
    <property type="evidence" value="ECO:0007669"/>
    <property type="project" value="UniProtKB-UniRule"/>
</dbReference>
<dbReference type="GO" id="GO:0003735">
    <property type="term" value="F:structural constituent of ribosome"/>
    <property type="evidence" value="ECO:0007669"/>
    <property type="project" value="InterPro"/>
</dbReference>
<dbReference type="GO" id="GO:0006412">
    <property type="term" value="P:translation"/>
    <property type="evidence" value="ECO:0007669"/>
    <property type="project" value="UniProtKB-UniRule"/>
</dbReference>
<dbReference type="Gene3D" id="3.100.10.10">
    <property type="match status" value="1"/>
</dbReference>
<dbReference type="HAMAP" id="MF_01341">
    <property type="entry name" value="Ribosomal_uL15"/>
    <property type="match status" value="1"/>
</dbReference>
<dbReference type="InterPro" id="IPR030878">
    <property type="entry name" value="Ribosomal_uL15"/>
</dbReference>
<dbReference type="InterPro" id="IPR021131">
    <property type="entry name" value="Ribosomal_uL15/eL18"/>
</dbReference>
<dbReference type="InterPro" id="IPR036227">
    <property type="entry name" value="Ribosomal_uL15/eL18_sf"/>
</dbReference>
<dbReference type="InterPro" id="IPR005749">
    <property type="entry name" value="Ribosomal_uL15_bac-type"/>
</dbReference>
<dbReference type="InterPro" id="IPR001196">
    <property type="entry name" value="Ribosomal_uL15_CS"/>
</dbReference>
<dbReference type="NCBIfam" id="TIGR01071">
    <property type="entry name" value="rplO_bact"/>
    <property type="match status" value="1"/>
</dbReference>
<dbReference type="PANTHER" id="PTHR12934">
    <property type="entry name" value="50S RIBOSOMAL PROTEIN L15"/>
    <property type="match status" value="1"/>
</dbReference>
<dbReference type="PANTHER" id="PTHR12934:SF11">
    <property type="entry name" value="LARGE RIBOSOMAL SUBUNIT PROTEIN UL15M"/>
    <property type="match status" value="1"/>
</dbReference>
<dbReference type="Pfam" id="PF00828">
    <property type="entry name" value="Ribosomal_L27A"/>
    <property type="match status" value="1"/>
</dbReference>
<dbReference type="SUPFAM" id="SSF52080">
    <property type="entry name" value="Ribosomal proteins L15p and L18e"/>
    <property type="match status" value="1"/>
</dbReference>
<dbReference type="PROSITE" id="PS00475">
    <property type="entry name" value="RIBOSOMAL_L15"/>
    <property type="match status" value="1"/>
</dbReference>
<gene>
    <name evidence="1" type="primary">rplO</name>
    <name type="ordered locus">Caul_1633</name>
</gene>
<feature type="chain" id="PRO_1000086703" description="Large ribosomal subunit protein uL15">
    <location>
        <begin position="1"/>
        <end position="161"/>
    </location>
</feature>
<feature type="region of interest" description="Disordered" evidence="2">
    <location>
        <begin position="1"/>
        <end position="41"/>
    </location>
</feature>
<feature type="compositionally biased region" description="Gly residues" evidence="2">
    <location>
        <begin position="22"/>
        <end position="36"/>
    </location>
</feature>
<sequence>MTKLNELAPAPGSTKGRMRVGRGPGSGKGKTAGRGVKGQKARSGVAIAGFEGGQMPLHMRMPKRGFNNPFRLEFAEVNLWRLEQAVEAGKLKAGADVSVADLVAAGVIRRELDGVKLLGKGEIKSALKLTVYSATEAAIKAVEAAGGSVTVTKKAKVQAEA</sequence>
<keyword id="KW-0687">Ribonucleoprotein</keyword>
<keyword id="KW-0689">Ribosomal protein</keyword>
<keyword id="KW-0694">RNA-binding</keyword>
<keyword id="KW-0699">rRNA-binding</keyword>
<comment type="function">
    <text evidence="1">Binds to the 23S rRNA.</text>
</comment>
<comment type="subunit">
    <text evidence="1">Part of the 50S ribosomal subunit.</text>
</comment>
<comment type="similarity">
    <text evidence="1">Belongs to the universal ribosomal protein uL15 family.</text>
</comment>